<evidence type="ECO:0000250" key="1">
    <source>
        <dbReference type="UniProtKB" id="O54946"/>
    </source>
</evidence>
<evidence type="ECO:0000255" key="2">
    <source>
        <dbReference type="PROSITE-ProRule" id="PRU00286"/>
    </source>
</evidence>
<evidence type="ECO:0000256" key="3">
    <source>
        <dbReference type="SAM" id="MobiDB-lite"/>
    </source>
</evidence>
<evidence type="ECO:0000269" key="4">
    <source>
    </source>
</evidence>
<evidence type="ECO:0000269" key="5">
    <source>
    </source>
</evidence>
<evidence type="ECO:0000269" key="6">
    <source>
    </source>
</evidence>
<evidence type="ECO:0000269" key="7">
    <source>
    </source>
</evidence>
<evidence type="ECO:0000269" key="8">
    <source>
    </source>
</evidence>
<evidence type="ECO:0000269" key="9">
    <source>
    </source>
</evidence>
<evidence type="ECO:0000269" key="10">
    <source>
    </source>
</evidence>
<evidence type="ECO:0000269" key="11">
    <source>
    </source>
</evidence>
<evidence type="ECO:0000269" key="12">
    <source ref="15"/>
</evidence>
<evidence type="ECO:0000303" key="13">
    <source>
    </source>
</evidence>
<evidence type="ECO:0000303" key="14">
    <source>
    </source>
</evidence>
<evidence type="ECO:0000303" key="15">
    <source>
    </source>
</evidence>
<evidence type="ECO:0000303" key="16">
    <source>
    </source>
</evidence>
<evidence type="ECO:0000303" key="17">
    <source>
    </source>
</evidence>
<evidence type="ECO:0000303" key="18">
    <source>
    </source>
</evidence>
<evidence type="ECO:0000303" key="19">
    <source>
    </source>
</evidence>
<evidence type="ECO:0000303" key="20">
    <source ref="4"/>
</evidence>
<evidence type="ECO:0000303" key="21">
    <source ref="6"/>
</evidence>
<evidence type="ECO:0000303" key="22">
    <source ref="7"/>
</evidence>
<evidence type="ECO:0000303" key="23">
    <source ref="9"/>
</evidence>
<evidence type="ECO:0000305" key="24"/>
<evidence type="ECO:0007744" key="25">
    <source>
    </source>
</evidence>
<evidence type="ECO:0007744" key="26">
    <source>
    </source>
</evidence>
<evidence type="ECO:0007744" key="27">
    <source>
    </source>
</evidence>
<evidence type="ECO:0007829" key="28">
    <source>
        <dbReference type="PDB" id="6U3R"/>
    </source>
</evidence>
<feature type="initiator methionine" description="Removed" evidence="12">
    <location>
        <position position="1"/>
    </location>
</feature>
<feature type="chain" id="PRO_0000071025" description="DnaJ homolog subfamily B member 6">
    <location>
        <begin position="2"/>
        <end position="326"/>
    </location>
</feature>
<feature type="domain" description="J" evidence="2">
    <location>
        <begin position="2"/>
        <end position="69"/>
    </location>
</feature>
<feature type="region of interest" description="Interaction with HSP70" evidence="5">
    <location>
        <begin position="2"/>
        <end position="146"/>
    </location>
</feature>
<feature type="region of interest" description="Interaction with KRT18" evidence="5">
    <location>
        <begin position="119"/>
        <end position="242"/>
    </location>
</feature>
<feature type="region of interest" description="Disordered" evidence="3">
    <location>
        <begin position="249"/>
        <end position="326"/>
    </location>
</feature>
<feature type="modified residue" description="Omega-N-methylarginine" evidence="1">
    <location>
        <position position="135"/>
    </location>
</feature>
<feature type="modified residue" description="Phosphoserine" evidence="25 26 27">
    <location>
        <position position="277"/>
    </location>
</feature>
<feature type="splice variant" id="VSP_053894" description="In isoform D." evidence="24">
    <original>MVDYYEVLGVQRHASPEDIKKAYRKLALKWHPDKNPENKEEAERKFKQVAEAYEVLSDA</original>
    <variation>MPHPRILKRP</variation>
    <location>
        <begin position="1"/>
        <end position="59"/>
    </location>
</feature>
<feature type="splice variant" id="VSP_001289" description="In isoform B." evidence="13 14 15 16 17 18 19 20 21 22">
    <original>VADDDALAEE</original>
    <variation>KEQLLRLDNK</variation>
    <location>
        <begin position="232"/>
        <end position="241"/>
    </location>
</feature>
<feature type="splice variant" id="VSP_001290" description="In isoform B." evidence="13 14 15 16 17 18 19 20 21 22">
    <location>
        <begin position="242"/>
        <end position="326"/>
    </location>
</feature>
<feature type="splice variant" id="VSP_026180" description="In isoform C." evidence="15 16 17 23">
    <original>LKEGGKRKKQKQREESKKKKSTKGNH</original>
    <variation>VQREAAVEQAQSETSLGARGQRGHK</variation>
    <location>
        <begin position="301"/>
        <end position="326"/>
    </location>
</feature>
<feature type="sequence variant" id="VAR_067833" description="In LGMDD1; the mutation results in inefficient inhibition of protein aggregation by isoform B; dbSNP:rs387907150." evidence="9">
    <original>F</original>
    <variation>I</variation>
    <location>
        <position position="89"/>
    </location>
</feature>
<feature type="sequence variant" id="VAR_067834" description="In LGMDD1; the mutation results in inefficient inhibition of protein aggregation by isoform B; dbSNP:rs387907046." evidence="8 9">
    <original>F</original>
    <variation>L</variation>
    <location>
        <position position="93"/>
    </location>
</feature>
<feature type="sequence variant" id="VAR_079428" description="Found in a family with autosomal-dominantly inherited distal-onset myopathy; significant loss of its ability to suppress aggregation of polyglutamine-containing proteins." evidence="10">
    <original>P</original>
    <variation>L</variation>
    <location>
        <position position="96"/>
    </location>
</feature>
<feature type="sequence variant" id="VAR_067835" description="In LGMDD1; dbSNP:rs387907047." evidence="8">
    <original>P</original>
    <variation>R</variation>
    <location>
        <position position="96"/>
    </location>
</feature>
<feature type="sequence conflict" description="In Ref. 9; BAD97321." evidence="24" ref="9">
    <original>G</original>
    <variation>S</variation>
    <location>
        <position position="128"/>
    </location>
</feature>
<feature type="sequence conflict" description="In Ref. 8; BAF85714." evidence="24" ref="8">
    <original>E</original>
    <variation>G</variation>
    <location>
        <position position="303"/>
    </location>
</feature>
<feature type="helix" evidence="28">
    <location>
        <begin position="3"/>
        <end position="8"/>
    </location>
</feature>
<feature type="helix" evidence="28">
    <location>
        <begin position="16"/>
        <end position="29"/>
    </location>
</feature>
<feature type="turn" evidence="28">
    <location>
        <begin position="32"/>
        <end position="34"/>
    </location>
</feature>
<feature type="helix" evidence="28">
    <location>
        <begin position="39"/>
        <end position="56"/>
    </location>
</feature>
<feature type="helix" evidence="28">
    <location>
        <begin position="59"/>
        <end position="68"/>
    </location>
</feature>
<feature type="helix" evidence="28">
    <location>
        <begin position="75"/>
        <end position="79"/>
    </location>
</feature>
<feature type="helix" evidence="28">
    <location>
        <begin position="96"/>
        <end position="103"/>
    </location>
</feature>
<feature type="strand" evidence="28">
    <location>
        <begin position="105"/>
        <end position="107"/>
    </location>
</feature>
<feature type="turn" evidence="28">
    <location>
        <begin position="113"/>
        <end position="115"/>
    </location>
</feature>
<feature type="turn" evidence="28">
    <location>
        <begin position="185"/>
        <end position="187"/>
    </location>
</feature>
<feature type="strand" evidence="28">
    <location>
        <begin position="188"/>
        <end position="198"/>
    </location>
</feature>
<feature type="strand" evidence="28">
    <location>
        <begin position="201"/>
        <end position="210"/>
    </location>
</feature>
<feature type="strand" evidence="28">
    <location>
        <begin position="213"/>
        <end position="220"/>
    </location>
</feature>
<feature type="strand" evidence="28">
    <location>
        <begin position="223"/>
        <end position="229"/>
    </location>
</feature>
<gene>
    <name type="primary">DNAJB6</name>
    <name type="synonym">HSJ2</name>
    <name type="synonym">MRJ</name>
    <name type="synonym">MSJ1</name>
</gene>
<protein>
    <recommendedName>
        <fullName>DnaJ homolog subfamily B member 6</fullName>
    </recommendedName>
    <alternativeName>
        <fullName>HHDJ1</fullName>
    </alternativeName>
    <alternativeName>
        <fullName>Heat shock protein J2</fullName>
        <shortName>HSJ-2</shortName>
    </alternativeName>
    <alternativeName>
        <fullName>MRJ</fullName>
    </alternativeName>
    <alternativeName>
        <fullName>MSJ-1</fullName>
    </alternativeName>
</protein>
<sequence>MVDYYEVLGVQRHASPEDIKKAYRKLALKWHPDKNPENKEEAERKFKQVAEAYEVLSDAKKRDIYDKYGKEGLNGGGGGGSHFDSPFEFGFTFRNPDDVFREFFGGRDPFSFDFFEDPFEDFFGNRRGPRGSRSRGTGSFFSAFSGFPSFGSGFSSFDTGFTSFGSLGHGGLTSFSSTSFGGSGMGNFKSISTSTKMVNGRKITTKRIVENGQERVEVEEDGQLKSLTINGVADDDALAEERMRRGQNALPAQPAGLRPPKPPRPASLLRHAPHCLSEEEGEQDRPRAPGPWDPLASAAGLKEGGKRKKQKQREESKKKKSTKGNH</sequence>
<keyword id="KW-0002">3D-structure</keyword>
<keyword id="KW-0025">Alternative splicing</keyword>
<keyword id="KW-0143">Chaperone</keyword>
<keyword id="KW-0963">Cytoplasm</keyword>
<keyword id="KW-0903">Direct protein sequencing</keyword>
<keyword id="KW-0225">Disease variant</keyword>
<keyword id="KW-0947">Limb-girdle muscular dystrophy</keyword>
<keyword id="KW-0488">Methylation</keyword>
<keyword id="KW-0539">Nucleus</keyword>
<keyword id="KW-0597">Phosphoprotein</keyword>
<keyword id="KW-1267">Proteomics identification</keyword>
<keyword id="KW-1185">Reference proteome</keyword>
<proteinExistence type="evidence at protein level"/>
<reference key="1">
    <citation type="journal article" date="1999" name="J. Biol. Chem.">
        <title>Pituitary tumor-transforming gene protein associates with ribosomal protein S10 and a novel human homologue of DnaJ in testicular cells.</title>
        <authorList>
            <person name="Pei L."/>
        </authorList>
    </citation>
    <scope>NUCLEOTIDE SEQUENCE [MRNA] (ISOFORM B)</scope>
    <scope>INTERACTION WITH PTTG</scope>
    <scope>TISSUE SPECIFICITY</scope>
    <source>
        <tissue>Testis</tissue>
    </source>
</reference>
<reference key="2">
    <citation type="journal article" date="2002" name="J. Biol. Chem.">
        <title>Characterization of a brain-enriched chaperone, MRJ, that inhibits Huntingtin aggregation and toxicity independently.</title>
        <authorList>
            <person name="Chuang J.-Z."/>
            <person name="Zhou H."/>
            <person name="Zhu M."/>
            <person name="Li S.-H."/>
            <person name="Li X.-J."/>
            <person name="Sung C.-H."/>
        </authorList>
    </citation>
    <scope>NUCLEOTIDE SEQUENCE [MRNA] (ISOFORM B)</scope>
    <scope>FUNCTION</scope>
    <scope>TISSUE SPECIFICITY</scope>
</reference>
<reference key="3">
    <citation type="journal article" date="2003" name="Mol. Biol. Rep.">
        <title>Characterization of two isoforms of a human DnaJ homologue, HSJ2.</title>
        <authorList>
            <person name="Hanai R."/>
            <person name="Mashima K."/>
        </authorList>
    </citation>
    <scope>NUCLEOTIDE SEQUENCE [MRNA] (ISOFORMS A AND B)</scope>
</reference>
<reference key="4">
    <citation type="submission" date="1998-04" db="EMBL/GenBank/DDBJ databases">
        <authorList>
            <person name="Zhang J.S."/>
            <person name="Nelson M."/>
            <person name="Wang L."/>
            <person name="Smith D.I."/>
        </authorList>
    </citation>
    <scope>NUCLEOTIDE SEQUENCE [MRNA] (ISOFORM B)</scope>
    <source>
        <tissue>Pancreas</tissue>
    </source>
</reference>
<reference key="5">
    <citation type="journal article" date="1999" name="J. Hum. Genet.">
        <title>Cloning, tissue expression, and chromosomal assignment of human MRJ gene for a member of the DNAJ protein family.</title>
        <authorList>
            <person name="Seki N."/>
            <person name="Hattori A."/>
            <person name="Hayashi A."/>
            <person name="Kozuma S."/>
            <person name="Miyajima N."/>
            <person name="Saito T."/>
        </authorList>
    </citation>
    <scope>NUCLEOTIDE SEQUENCE [MRNA] (ISOFORM B)</scope>
    <scope>TISSUE SPECIFICITY</scope>
    <source>
        <tissue>Testis</tissue>
    </source>
</reference>
<reference key="6">
    <citation type="submission" date="1998-07" db="EMBL/GenBank/DDBJ databases">
        <title>HSJ2, a novel human homologue of the bacterial heat-shock protein DnaJ.</title>
        <authorList>
            <person name="Zhang W."/>
            <person name="Wan T."/>
            <person name="Yuan Z."/>
            <person name="Cao X."/>
        </authorList>
    </citation>
    <scope>NUCLEOTIDE SEQUENCE [MRNA] (ISOFORM B)</scope>
</reference>
<reference key="7">
    <citation type="submission" date="2004-06" db="EMBL/GenBank/DDBJ databases">
        <title>Cloning of human full open reading frames in Gateway(TM) system entry vector (pDONR201).</title>
        <authorList>
            <person name="Ebert L."/>
            <person name="Schick M."/>
            <person name="Neubert P."/>
            <person name="Schatten R."/>
            <person name="Henze S."/>
            <person name="Korn B."/>
        </authorList>
    </citation>
    <scope>NUCLEOTIDE SEQUENCE [LARGE SCALE MRNA] (ISOFORM B)</scope>
</reference>
<reference key="8">
    <citation type="journal article" date="2004" name="Nat. Genet.">
        <title>Complete sequencing and characterization of 21,243 full-length human cDNAs.</title>
        <authorList>
            <person name="Ota T."/>
            <person name="Suzuki Y."/>
            <person name="Nishikawa T."/>
            <person name="Otsuki T."/>
            <person name="Sugiyama T."/>
            <person name="Irie R."/>
            <person name="Wakamatsu A."/>
            <person name="Hayashi K."/>
            <person name="Sato H."/>
            <person name="Nagai K."/>
            <person name="Kimura K."/>
            <person name="Makita H."/>
            <person name="Sekine M."/>
            <person name="Obayashi M."/>
            <person name="Nishi T."/>
            <person name="Shibahara T."/>
            <person name="Tanaka T."/>
            <person name="Ishii S."/>
            <person name="Yamamoto J."/>
            <person name="Saito K."/>
            <person name="Kawai Y."/>
            <person name="Isono Y."/>
            <person name="Nakamura Y."/>
            <person name="Nagahari K."/>
            <person name="Murakami K."/>
            <person name="Yasuda T."/>
            <person name="Iwayanagi T."/>
            <person name="Wagatsuma M."/>
            <person name="Shiratori A."/>
            <person name="Sudo H."/>
            <person name="Hosoiri T."/>
            <person name="Kaku Y."/>
            <person name="Kodaira H."/>
            <person name="Kondo H."/>
            <person name="Sugawara M."/>
            <person name="Takahashi M."/>
            <person name="Kanda K."/>
            <person name="Yokoi T."/>
            <person name="Furuya T."/>
            <person name="Kikkawa E."/>
            <person name="Omura Y."/>
            <person name="Abe K."/>
            <person name="Kamihara K."/>
            <person name="Katsuta N."/>
            <person name="Sato K."/>
            <person name="Tanikawa M."/>
            <person name="Yamazaki M."/>
            <person name="Ninomiya K."/>
            <person name="Ishibashi T."/>
            <person name="Yamashita H."/>
            <person name="Murakawa K."/>
            <person name="Fujimori K."/>
            <person name="Tanai H."/>
            <person name="Kimata M."/>
            <person name="Watanabe M."/>
            <person name="Hiraoka S."/>
            <person name="Chiba Y."/>
            <person name="Ishida S."/>
            <person name="Ono Y."/>
            <person name="Takiguchi S."/>
            <person name="Watanabe S."/>
            <person name="Yosida M."/>
            <person name="Hotuta T."/>
            <person name="Kusano J."/>
            <person name="Kanehori K."/>
            <person name="Takahashi-Fujii A."/>
            <person name="Hara H."/>
            <person name="Tanase T.-O."/>
            <person name="Nomura Y."/>
            <person name="Togiya S."/>
            <person name="Komai F."/>
            <person name="Hara R."/>
            <person name="Takeuchi K."/>
            <person name="Arita M."/>
            <person name="Imose N."/>
            <person name="Musashino K."/>
            <person name="Yuuki H."/>
            <person name="Oshima A."/>
            <person name="Sasaki N."/>
            <person name="Aotsuka S."/>
            <person name="Yoshikawa Y."/>
            <person name="Matsunawa H."/>
            <person name="Ichihara T."/>
            <person name="Shiohata N."/>
            <person name="Sano S."/>
            <person name="Moriya S."/>
            <person name="Momiyama H."/>
            <person name="Satoh N."/>
            <person name="Takami S."/>
            <person name="Terashima Y."/>
            <person name="Suzuki O."/>
            <person name="Nakagawa S."/>
            <person name="Senoh A."/>
            <person name="Mizoguchi H."/>
            <person name="Goto Y."/>
            <person name="Shimizu F."/>
            <person name="Wakebe H."/>
            <person name="Hishigaki H."/>
            <person name="Watanabe T."/>
            <person name="Sugiyama A."/>
            <person name="Takemoto M."/>
            <person name="Kawakami B."/>
            <person name="Yamazaki M."/>
            <person name="Watanabe K."/>
            <person name="Kumagai A."/>
            <person name="Itakura S."/>
            <person name="Fukuzumi Y."/>
            <person name="Fujimori Y."/>
            <person name="Komiyama M."/>
            <person name="Tashiro H."/>
            <person name="Tanigami A."/>
            <person name="Fujiwara T."/>
            <person name="Ono T."/>
            <person name="Yamada K."/>
            <person name="Fujii Y."/>
            <person name="Ozaki K."/>
            <person name="Hirao M."/>
            <person name="Ohmori Y."/>
            <person name="Kawabata A."/>
            <person name="Hikiji T."/>
            <person name="Kobatake N."/>
            <person name="Inagaki H."/>
            <person name="Ikema Y."/>
            <person name="Okamoto S."/>
            <person name="Okitani R."/>
            <person name="Kawakami T."/>
            <person name="Noguchi S."/>
            <person name="Itoh T."/>
            <person name="Shigeta K."/>
            <person name="Senba T."/>
            <person name="Matsumura K."/>
            <person name="Nakajima Y."/>
            <person name="Mizuno T."/>
            <person name="Morinaga M."/>
            <person name="Sasaki M."/>
            <person name="Togashi T."/>
            <person name="Oyama M."/>
            <person name="Hata H."/>
            <person name="Watanabe M."/>
            <person name="Komatsu T."/>
            <person name="Mizushima-Sugano J."/>
            <person name="Satoh T."/>
            <person name="Shirai Y."/>
            <person name="Takahashi Y."/>
            <person name="Nakagawa K."/>
            <person name="Okumura K."/>
            <person name="Nagase T."/>
            <person name="Nomura N."/>
            <person name="Kikuchi H."/>
            <person name="Masuho Y."/>
            <person name="Yamashita R."/>
            <person name="Nakai K."/>
            <person name="Yada T."/>
            <person name="Nakamura Y."/>
            <person name="Ohara O."/>
            <person name="Isogai T."/>
            <person name="Sugano S."/>
        </authorList>
    </citation>
    <scope>NUCLEOTIDE SEQUENCE [LARGE SCALE MRNA] (ISOFORMS A; B AND C)</scope>
    <source>
        <tissue>Uterus</tissue>
    </source>
</reference>
<reference key="9">
    <citation type="submission" date="2005-04" db="EMBL/GenBank/DDBJ databases">
        <authorList>
            <person name="Totoki Y."/>
            <person name="Toyoda A."/>
            <person name="Takeda T."/>
            <person name="Sakaki Y."/>
            <person name="Tanaka A."/>
            <person name="Yokoyama S."/>
            <person name="Ohara O."/>
            <person name="Nagase T."/>
            <person name="Kikuno R.F."/>
        </authorList>
    </citation>
    <scope>NUCLEOTIDE SEQUENCE [LARGE SCALE MRNA] (ISOFORMS A AND C)</scope>
    <source>
        <tissue>Aortic endothelium</tissue>
        <tissue>Kidney</tissue>
    </source>
</reference>
<reference key="10">
    <citation type="journal article" date="2007" name="BMC Genomics">
        <title>The full-ORF clone resource of the German cDNA consortium.</title>
        <authorList>
            <person name="Bechtel S."/>
            <person name="Rosenfelder H."/>
            <person name="Duda A."/>
            <person name="Schmidt C.P."/>
            <person name="Ernst U."/>
            <person name="Wellenreuther R."/>
            <person name="Mehrle A."/>
            <person name="Schuster C."/>
            <person name="Bahr A."/>
            <person name="Bloecker H."/>
            <person name="Heubner D."/>
            <person name="Hoerlein A."/>
            <person name="Michel G."/>
            <person name="Wedler H."/>
            <person name="Koehrer K."/>
            <person name="Ottenwaelder B."/>
            <person name="Poustka A."/>
            <person name="Wiemann S."/>
            <person name="Schupp I."/>
        </authorList>
    </citation>
    <scope>NUCLEOTIDE SEQUENCE [LARGE SCALE MRNA] (ISOFORM B)</scope>
    <source>
        <tissue>Fetal kidney</tissue>
    </source>
</reference>
<reference key="11">
    <citation type="journal article" date="2003" name="Nature">
        <title>The DNA sequence of human chromosome 7.</title>
        <authorList>
            <person name="Hillier L.W."/>
            <person name="Fulton R.S."/>
            <person name="Fulton L.A."/>
            <person name="Graves T.A."/>
            <person name="Pepin K.H."/>
            <person name="Wagner-McPherson C."/>
            <person name="Layman D."/>
            <person name="Maas J."/>
            <person name="Jaeger S."/>
            <person name="Walker R."/>
            <person name="Wylie K."/>
            <person name="Sekhon M."/>
            <person name="Becker M.C."/>
            <person name="O'Laughlin M.D."/>
            <person name="Schaller M.E."/>
            <person name="Fewell G.A."/>
            <person name="Delehaunty K.D."/>
            <person name="Miner T.L."/>
            <person name="Nash W.E."/>
            <person name="Cordes M."/>
            <person name="Du H."/>
            <person name="Sun H."/>
            <person name="Edwards J."/>
            <person name="Bradshaw-Cordum H."/>
            <person name="Ali J."/>
            <person name="Andrews S."/>
            <person name="Isak A."/>
            <person name="Vanbrunt A."/>
            <person name="Nguyen C."/>
            <person name="Du F."/>
            <person name="Lamar B."/>
            <person name="Courtney L."/>
            <person name="Kalicki J."/>
            <person name="Ozersky P."/>
            <person name="Bielicki L."/>
            <person name="Scott K."/>
            <person name="Holmes A."/>
            <person name="Harkins R."/>
            <person name="Harris A."/>
            <person name="Strong C.M."/>
            <person name="Hou S."/>
            <person name="Tomlinson C."/>
            <person name="Dauphin-Kohlberg S."/>
            <person name="Kozlowicz-Reilly A."/>
            <person name="Leonard S."/>
            <person name="Rohlfing T."/>
            <person name="Rock S.M."/>
            <person name="Tin-Wollam A.-M."/>
            <person name="Abbott A."/>
            <person name="Minx P."/>
            <person name="Maupin R."/>
            <person name="Strowmatt C."/>
            <person name="Latreille P."/>
            <person name="Miller N."/>
            <person name="Johnson D."/>
            <person name="Murray J."/>
            <person name="Woessner J.P."/>
            <person name="Wendl M.C."/>
            <person name="Yang S.-P."/>
            <person name="Schultz B.R."/>
            <person name="Wallis J.W."/>
            <person name="Spieth J."/>
            <person name="Bieri T.A."/>
            <person name="Nelson J.O."/>
            <person name="Berkowicz N."/>
            <person name="Wohldmann P.E."/>
            <person name="Cook L.L."/>
            <person name="Hickenbotham M.T."/>
            <person name="Eldred J."/>
            <person name="Williams D."/>
            <person name="Bedell J.A."/>
            <person name="Mardis E.R."/>
            <person name="Clifton S.W."/>
            <person name="Chissoe S.L."/>
            <person name="Marra M.A."/>
            <person name="Raymond C."/>
            <person name="Haugen E."/>
            <person name="Gillett W."/>
            <person name="Zhou Y."/>
            <person name="James R."/>
            <person name="Phelps K."/>
            <person name="Iadanoto S."/>
            <person name="Bubb K."/>
            <person name="Simms E."/>
            <person name="Levy R."/>
            <person name="Clendenning J."/>
            <person name="Kaul R."/>
            <person name="Kent W.J."/>
            <person name="Furey T.S."/>
            <person name="Baertsch R.A."/>
            <person name="Brent M.R."/>
            <person name="Keibler E."/>
            <person name="Flicek P."/>
            <person name="Bork P."/>
            <person name="Suyama M."/>
            <person name="Bailey J.A."/>
            <person name="Portnoy M.E."/>
            <person name="Torrents D."/>
            <person name="Chinwalla A.T."/>
            <person name="Gish W.R."/>
            <person name="Eddy S.R."/>
            <person name="McPherson J.D."/>
            <person name="Olson M.V."/>
            <person name="Eichler E.E."/>
            <person name="Green E.D."/>
            <person name="Waterston R.H."/>
            <person name="Wilson R.K."/>
        </authorList>
    </citation>
    <scope>NUCLEOTIDE SEQUENCE [LARGE SCALE GENOMIC DNA]</scope>
</reference>
<reference key="12">
    <citation type="journal article" date="2003" name="Science">
        <title>Human chromosome 7: DNA sequence and biology.</title>
        <authorList>
            <person name="Scherer S.W."/>
            <person name="Cheung J."/>
            <person name="MacDonald J.R."/>
            <person name="Osborne L.R."/>
            <person name="Nakabayashi K."/>
            <person name="Herbrick J.-A."/>
            <person name="Carson A.R."/>
            <person name="Parker-Katiraee L."/>
            <person name="Skaug J."/>
            <person name="Khaja R."/>
            <person name="Zhang J."/>
            <person name="Hudek A.K."/>
            <person name="Li M."/>
            <person name="Haddad M."/>
            <person name="Duggan G.E."/>
            <person name="Fernandez B.A."/>
            <person name="Kanematsu E."/>
            <person name="Gentles S."/>
            <person name="Christopoulos C.C."/>
            <person name="Choufani S."/>
            <person name="Kwasnicka D."/>
            <person name="Zheng X.H."/>
            <person name="Lai Z."/>
            <person name="Nusskern D.R."/>
            <person name="Zhang Q."/>
            <person name="Gu Z."/>
            <person name="Lu F."/>
            <person name="Zeesman S."/>
            <person name="Nowaczyk M.J."/>
            <person name="Teshima I."/>
            <person name="Chitayat D."/>
            <person name="Shuman C."/>
            <person name="Weksberg R."/>
            <person name="Zackai E.H."/>
            <person name="Grebe T.A."/>
            <person name="Cox S.R."/>
            <person name="Kirkpatrick S.J."/>
            <person name="Rahman N."/>
            <person name="Friedman J.M."/>
            <person name="Heng H.H.Q."/>
            <person name="Pelicci P.G."/>
            <person name="Lo-Coco F."/>
            <person name="Belloni E."/>
            <person name="Shaffer L.G."/>
            <person name="Pober B."/>
            <person name="Morton C.C."/>
            <person name="Gusella J.F."/>
            <person name="Bruns G.A.P."/>
            <person name="Korf B.R."/>
            <person name="Quade B.J."/>
            <person name="Ligon A.H."/>
            <person name="Ferguson H."/>
            <person name="Higgins A.W."/>
            <person name="Leach N.T."/>
            <person name="Herrick S.R."/>
            <person name="Lemyre E."/>
            <person name="Farra C.G."/>
            <person name="Kim H.-G."/>
            <person name="Summers A.M."/>
            <person name="Gripp K.W."/>
            <person name="Roberts W."/>
            <person name="Szatmari P."/>
            <person name="Winsor E.J.T."/>
            <person name="Grzeschik K.-H."/>
            <person name="Teebi A."/>
            <person name="Minassian B.A."/>
            <person name="Kere J."/>
            <person name="Armengol L."/>
            <person name="Pujana M.A."/>
            <person name="Estivill X."/>
            <person name="Wilson M.D."/>
            <person name="Koop B.F."/>
            <person name="Tosi S."/>
            <person name="Moore G.E."/>
            <person name="Boright A.P."/>
            <person name="Zlotorynski E."/>
            <person name="Kerem B."/>
            <person name="Kroisel P.M."/>
            <person name="Petek E."/>
            <person name="Oscier D.G."/>
            <person name="Mould S.J."/>
            <person name="Doehner H."/>
            <person name="Doehner K."/>
            <person name="Rommens J.M."/>
            <person name="Vincent J.B."/>
            <person name="Venter J.C."/>
            <person name="Li P.W."/>
            <person name="Mural R.J."/>
            <person name="Adams M.D."/>
            <person name="Tsui L.-C."/>
        </authorList>
    </citation>
    <scope>NUCLEOTIDE SEQUENCE [LARGE SCALE GENOMIC DNA]</scope>
</reference>
<reference key="13">
    <citation type="submission" date="2005-07" db="EMBL/GenBank/DDBJ databases">
        <authorList>
            <person name="Mural R.J."/>
            <person name="Istrail S."/>
            <person name="Sutton G.G."/>
            <person name="Florea L."/>
            <person name="Halpern A.L."/>
            <person name="Mobarry C.M."/>
            <person name="Lippert R."/>
            <person name="Walenz B."/>
            <person name="Shatkay H."/>
            <person name="Dew I."/>
            <person name="Miller J.R."/>
            <person name="Flanigan M.J."/>
            <person name="Edwards N.J."/>
            <person name="Bolanos R."/>
            <person name="Fasulo D."/>
            <person name="Halldorsson B.V."/>
            <person name="Hannenhalli S."/>
            <person name="Turner R."/>
            <person name="Yooseph S."/>
            <person name="Lu F."/>
            <person name="Nusskern D.R."/>
            <person name="Shue B.C."/>
            <person name="Zheng X.H."/>
            <person name="Zhong F."/>
            <person name="Delcher A.L."/>
            <person name="Huson D.H."/>
            <person name="Kravitz S.A."/>
            <person name="Mouchard L."/>
            <person name="Reinert K."/>
            <person name="Remington K.A."/>
            <person name="Clark A.G."/>
            <person name="Waterman M.S."/>
            <person name="Eichler E.E."/>
            <person name="Adams M.D."/>
            <person name="Hunkapiller M.W."/>
            <person name="Myers E.W."/>
            <person name="Venter J.C."/>
        </authorList>
    </citation>
    <scope>NUCLEOTIDE SEQUENCE [LARGE SCALE GENOMIC DNA]</scope>
</reference>
<reference key="14">
    <citation type="journal article" date="2004" name="Genome Res.">
        <title>The status, quality, and expansion of the NIH full-length cDNA project: the Mammalian Gene Collection (MGC).</title>
        <authorList>
            <consortium name="The MGC Project Team"/>
        </authorList>
    </citation>
    <scope>NUCLEOTIDE SEQUENCE [LARGE SCALE MRNA] (ISOFORMS A AND B)</scope>
    <source>
        <tissue>Placenta</tissue>
        <tissue>Skin</tissue>
    </source>
</reference>
<reference key="15">
    <citation type="submission" date="2009-03" db="UniProtKB">
        <authorList>
            <person name="Bienvenut W.V."/>
            <person name="Waridel P."/>
            <person name="Quadroni M."/>
        </authorList>
    </citation>
    <scope>PROTEIN SEQUENCE OF 2-12; 48-60; 71-101; 208-242 AND 271-287</scope>
    <scope>CLEAVAGE OF INITIATOR METHIONINE</scope>
    <scope>IDENTIFICATION BY MASS SPECTROMETRY</scope>
    <source>
        <tissue>Embryonic kidney</tissue>
    </source>
</reference>
<reference key="16">
    <citation type="journal article" date="2000" name="J. Biol. Chem.">
        <title>Identification of Mrj, a DnaJ/Hsp40 family protein, as a keratin 8/18 filament regulatory protein.</title>
        <authorList>
            <person name="Izawa I."/>
            <person name="Nishizawa M."/>
            <person name="Ohtakara K."/>
            <person name="Ohtsuka K."/>
            <person name="Inada H."/>
            <person name="Inagaki M."/>
        </authorList>
    </citation>
    <scope>FUNCTION</scope>
    <scope>INTERACTION WITH HSP70 AND KRT18</scope>
    <scope>SUBCELLULAR LOCATION</scope>
</reference>
<reference key="17">
    <citation type="journal article" date="2006" name="Cell">
        <title>Global, in vivo, and site-specific phosphorylation dynamics in signaling networks.</title>
        <authorList>
            <person name="Olsen J.V."/>
            <person name="Blagoev B."/>
            <person name="Gnad F."/>
            <person name="Macek B."/>
            <person name="Kumar C."/>
            <person name="Mortensen P."/>
            <person name="Mann M."/>
        </authorList>
    </citation>
    <scope>PHOSPHORYLATION [LARGE SCALE ANALYSIS] AT SER-277</scope>
    <scope>IDENTIFICATION BY MASS SPECTROMETRY [LARGE SCALE ANALYSIS]</scope>
    <source>
        <tissue>Cervix carcinoma</tissue>
    </source>
</reference>
<reference key="18">
    <citation type="journal article" date="2008" name="Proc. Natl. Acad. Sci. U.S.A.">
        <title>A quantitative atlas of mitotic phosphorylation.</title>
        <authorList>
            <person name="Dephoure N."/>
            <person name="Zhou C."/>
            <person name="Villen J."/>
            <person name="Beausoleil S.A."/>
            <person name="Bakalarski C.E."/>
            <person name="Elledge S.J."/>
            <person name="Gygi S.P."/>
        </authorList>
    </citation>
    <scope>IDENTIFICATION BY MASS SPECTROMETRY [LARGE SCALE ANALYSIS]</scope>
    <source>
        <tissue>Cervix carcinoma</tissue>
    </source>
</reference>
<reference key="19">
    <citation type="journal article" date="2010" name="Mol. Cell">
        <title>A DNAJB chaperone subfamily with HDAC-dependent activities suppresses toxic protein aggregation.</title>
        <authorList>
            <person name="Hageman J."/>
            <person name="Rujano M.A."/>
            <person name="van Waarde M.A."/>
            <person name="Kakkar V."/>
            <person name="Dirks R.P."/>
            <person name="Govorukhina N."/>
            <person name="Oosterveld-Hut H.M."/>
            <person name="Lubsen N.H."/>
            <person name="Kampinga H.H."/>
        </authorList>
    </citation>
    <scope>FUNCTION AS SUPPRESSOR OF PROTEIN AGGREGATION</scope>
</reference>
<reference key="20">
    <citation type="journal article" date="2011" name="BMC Syst. Biol.">
        <title>Initial characterization of the human central proteome.</title>
        <authorList>
            <person name="Burkard T.R."/>
            <person name="Planyavsky M."/>
            <person name="Kaupe I."/>
            <person name="Breitwieser F.P."/>
            <person name="Buerckstuemmer T."/>
            <person name="Bennett K.L."/>
            <person name="Superti-Furga G."/>
            <person name="Colinge J."/>
        </authorList>
    </citation>
    <scope>IDENTIFICATION BY MASS SPECTROMETRY [LARGE SCALE ANALYSIS]</scope>
</reference>
<reference key="21">
    <citation type="journal article" date="2011" name="Sci. Signal.">
        <title>System-wide temporal characterization of the proteome and phosphoproteome of human embryonic stem cell differentiation.</title>
        <authorList>
            <person name="Rigbolt K.T."/>
            <person name="Prokhorova T.A."/>
            <person name="Akimov V."/>
            <person name="Henningsen J."/>
            <person name="Johansen P.T."/>
            <person name="Kratchmarova I."/>
            <person name="Kassem M."/>
            <person name="Mann M."/>
            <person name="Olsen J.V."/>
            <person name="Blagoev B."/>
        </authorList>
    </citation>
    <scope>PHOSPHORYLATION [LARGE SCALE ANALYSIS] AT SER-277</scope>
    <scope>IDENTIFICATION BY MASS SPECTROMETRY [LARGE SCALE ANALYSIS]</scope>
</reference>
<reference key="22">
    <citation type="journal article" date="2012" name="Nat. Genet.">
        <title>Mutations affecting the cytoplasmic functions of the co-chaperone DNAJB6 cause limb-girdle muscular dystrophy.</title>
        <authorList>
            <person name="Sarparanta J."/>
            <person name="Jonson P.H."/>
            <person name="Golzio C."/>
            <person name="Sandell S."/>
            <person name="Luque H."/>
            <person name="Screen M."/>
            <person name="McDonald K."/>
            <person name="Stajich J.M."/>
            <person name="Mahjneh I."/>
            <person name="Vihola A."/>
            <person name="Raheem O."/>
            <person name="Penttila S."/>
            <person name="Lehtinen S."/>
            <person name="Huovinen S."/>
            <person name="Palmio J."/>
            <person name="Tasca G."/>
            <person name="Ricci E."/>
            <person name="Hackman P."/>
            <person name="Hauser M."/>
            <person name="Katsanis N."/>
            <person name="Udd B."/>
        </authorList>
    </citation>
    <scope>FUNCTION IN INHIBITION OF HUNTINGTIN AGGREGATION</scope>
    <scope>SUBUNIT</scope>
    <scope>INTERACTION WITH BAG3; HSPB8 AND STUB1</scope>
    <scope>TISSUE SPECIFICITY</scope>
    <scope>SUBCELLULAR LOCATION</scope>
    <scope>VARIANTS LGMDD1 ILE-89 AND LEU-93</scope>
    <scope>CHARACTERIZATION OF VARIANTS LGMDD1 ILE-89 AND LEU-93</scope>
</reference>
<reference key="23">
    <citation type="journal article" date="2012" name="Proc. Natl. Acad. Sci. U.S.A.">
        <title>N-terminal acetylome analyses and functional insights of the N-terminal acetyltransferase NatB.</title>
        <authorList>
            <person name="Van Damme P."/>
            <person name="Lasa M."/>
            <person name="Polevoda B."/>
            <person name="Gazquez C."/>
            <person name="Elosegui-Artola A."/>
            <person name="Kim D.S."/>
            <person name="De Juan-Pardo E."/>
            <person name="Demeyer K."/>
            <person name="Hole K."/>
            <person name="Larrea E."/>
            <person name="Timmerman E."/>
            <person name="Prieto J."/>
            <person name="Arnesen T."/>
            <person name="Sherman F."/>
            <person name="Gevaert K."/>
            <person name="Aldabe R."/>
        </authorList>
    </citation>
    <scope>IDENTIFICATION BY MASS SPECTROMETRY [LARGE SCALE ANALYSIS]</scope>
</reference>
<reference key="24">
    <citation type="journal article" date="2013" name="J. Proteome Res.">
        <title>Toward a comprehensive characterization of a human cancer cell phosphoproteome.</title>
        <authorList>
            <person name="Zhou H."/>
            <person name="Di Palma S."/>
            <person name="Preisinger C."/>
            <person name="Peng M."/>
            <person name="Polat A.N."/>
            <person name="Heck A.J."/>
            <person name="Mohammed S."/>
        </authorList>
    </citation>
    <scope>PHOSPHORYLATION [LARGE SCALE ANALYSIS] AT SER-277</scope>
    <scope>IDENTIFICATION BY MASS SPECTROMETRY [LARGE SCALE ANALYSIS]</scope>
    <source>
        <tissue>Cervix carcinoma</tissue>
        <tissue>Erythroleukemia</tissue>
    </source>
</reference>
<reference key="25">
    <citation type="journal article" date="2012" name="Ann. Neurol.">
        <title>Exome sequencing reveals DNAJB6 mutations in dominantly-inherited myopathy.</title>
        <authorList>
            <person name="Harms M.B."/>
            <person name="Sommerville R.B."/>
            <person name="Allred P."/>
            <person name="Bell S."/>
            <person name="Ma D."/>
            <person name="Cooper P."/>
            <person name="Lopate G."/>
            <person name="Pestronk A."/>
            <person name="Weihl C.C."/>
            <person name="Baloh R.H."/>
        </authorList>
    </citation>
    <scope>VARIANTS LGMDD1 LEU-93 AND ARG-96</scope>
</reference>
<reference key="26">
    <citation type="journal article" date="2017" name="Clin. Genet.">
        <title>A novel DNAJB6 mutation causes dominantly inherited distal-onset myopathy and compromises DNAJB6 function.</title>
        <authorList>
            <person name="Tsai P.C."/>
            <person name="Tsai Y.S."/>
            <person name="Soong B.W."/>
            <person name="Huang Y.H."/>
            <person name="Wu H.T."/>
            <person name="Chen Y.H."/>
            <person name="Lin K.P."/>
            <person name="Liao Y.C."/>
            <person name="Lee Y.C."/>
        </authorList>
    </citation>
    <scope>VARIANT LEU-96</scope>
    <scope>CHARACTERIZATION OF VARIANT LEU-96</scope>
    <scope>FUNCTION</scope>
</reference>
<organism>
    <name type="scientific">Homo sapiens</name>
    <name type="common">Human</name>
    <dbReference type="NCBI Taxonomy" id="9606"/>
    <lineage>
        <taxon>Eukaryota</taxon>
        <taxon>Metazoa</taxon>
        <taxon>Chordata</taxon>
        <taxon>Craniata</taxon>
        <taxon>Vertebrata</taxon>
        <taxon>Euteleostomi</taxon>
        <taxon>Mammalia</taxon>
        <taxon>Eutheria</taxon>
        <taxon>Euarchontoglires</taxon>
        <taxon>Primates</taxon>
        <taxon>Haplorrhini</taxon>
        <taxon>Catarrhini</taxon>
        <taxon>Hominidae</taxon>
        <taxon>Homo</taxon>
    </lineage>
</organism>
<accession>O75190</accession>
<accession>A4D232</accession>
<accession>A8K7D8</accession>
<accession>A8KAG0</accession>
<accession>B4DN73</accession>
<accession>E9PCZ2</accession>
<accession>O95806</accession>
<accession>Q53EN8</accession>
<accession>Q59EF2</accession>
<accession>Q6FIC8</accession>
<accession>Q75MA2</accession>
<accession>Q9UIK6</accession>
<name>DNJB6_HUMAN</name>
<comment type="function">
    <text evidence="5 6 7 9 10">Has a stimulatory effect on the ATPase activity of HSP70 in a dose-dependent and time-dependent manner and hence acts as a co-chaperone of HSP70 (PubMed:10954706, PubMed:28233300). Plays an indispensable role in the organization of KRT8/KRT18 filaments (PubMed:10954706). Acts as an endogenous molecular chaperone for neuronal proteins including huntingtin (PubMed:11896048, PubMed:22366786). Suppresses aggregation and toxicity of polyglutamine-containing, aggregation-prone proteins (PubMed:20159555, PubMed:22366786). Also reduces cellular toxicity and caspase-3 activity (PubMed:11896048).</text>
</comment>
<comment type="function">
    <molecule>Isoform B</molecule>
    <text evidence="7 9">Isoform B but not isoform A inhibits huntingtin aggregation.</text>
</comment>
<comment type="subunit">
    <text evidence="1 5 9 11">Homooligomer (PubMed:22366786). Interacts with BAG3, HSPB8 and STUB1 (PubMed:22366786). Interacts with ALKBH1 (By similarity). Interacts with HSP70, KRT18 and PTTG (PubMed:10954706, PubMed:9915854).</text>
</comment>
<comment type="subunit">
    <molecule>Isoform B</molecule>
    <text evidence="7">Interacts with histone deacetylases HDAC4, HDAC6, and SIRT2, HDAC activity is required for antiaggregation.</text>
</comment>
<comment type="interaction">
    <interactant intactId="EBI-1053164">
        <id>O75190</id>
    </interactant>
    <interactant intactId="EBI-10254793">
        <id>Q6XD76</id>
        <label>ASCL4</label>
    </interactant>
    <organismsDiffer>false</organismsDiffer>
    <experiments>3</experiments>
</comment>
<comment type="interaction">
    <interactant intactId="EBI-1053164">
        <id>O75190</id>
    </interactant>
    <interactant intactId="EBI-714781">
        <id>Q9HCU9</id>
        <label>BRMS1</label>
    </interactant>
    <organismsDiffer>false</organismsDiffer>
    <experiments>2</experiments>
</comment>
<comment type="interaction">
    <interactant intactId="EBI-1053164">
        <id>O75190</id>
    </interactant>
    <interactant intactId="EBI-744027">
        <id>Q13191</id>
        <label>CBLB</label>
    </interactant>
    <organismsDiffer>false</organismsDiffer>
    <experiments>3</experiments>
</comment>
<comment type="interaction">
    <interactant intactId="EBI-1053164">
        <id>O75190</id>
    </interactant>
    <interactant intactId="EBI-11953200">
        <id>Q494V2-2</id>
        <label>CFAP100</label>
    </interactant>
    <organismsDiffer>false</organismsDiffer>
    <experiments>3</experiments>
</comment>
<comment type="interaction">
    <interactant intactId="EBI-1053164">
        <id>O75190</id>
    </interactant>
    <interactant intactId="EBI-3893327">
        <id>Q6P1L5</id>
        <label>FAM117B</label>
    </interactant>
    <organismsDiffer>false</organismsDiffer>
    <experiments>3</experiments>
</comment>
<comment type="interaction">
    <interactant intactId="EBI-1053164">
        <id>O75190</id>
    </interactant>
    <interactant intactId="EBI-713456">
        <id>Q13123</id>
        <label>IK</label>
    </interactant>
    <organismsDiffer>false</organismsDiffer>
    <experiments>3</experiments>
</comment>
<comment type="interaction">
    <interactant intactId="EBI-1053164">
        <id>O75190</id>
    </interactant>
    <interactant intactId="EBI-297888">
        <id>P05783</id>
        <label>KRT18</label>
    </interactant>
    <organismsDiffer>false</organismsDiffer>
    <experiments>6</experiments>
</comment>
<comment type="interaction">
    <interactant intactId="EBI-1053164">
        <id>O75190</id>
    </interactant>
    <interactant intactId="EBI-10694180">
        <id>Q8TD91-2</id>
        <label>MAGEC3</label>
    </interactant>
    <organismsDiffer>false</organismsDiffer>
    <experiments>3</experiments>
</comment>
<comment type="interaction">
    <interactant intactId="EBI-1053164">
        <id>O75190</id>
    </interactant>
    <interactant intactId="EBI-721328">
        <id>P58340</id>
        <label>MLF1</label>
    </interactant>
    <organismsDiffer>false</organismsDiffer>
    <experiments>4</experiments>
</comment>
<comment type="interaction">
    <interactant intactId="EBI-1053164">
        <id>O75190</id>
    </interactant>
    <interactant intactId="EBI-1051875">
        <id>Q15773</id>
        <label>MLF2</label>
    </interactant>
    <organismsDiffer>false</organismsDiffer>
    <experiments>4</experiments>
</comment>
<comment type="interaction">
    <interactant intactId="EBI-1053164">
        <id>O75190</id>
    </interactant>
    <interactant intactId="EBI-366570">
        <id>Q9BUL9</id>
        <label>RPP25</label>
    </interactant>
    <organismsDiffer>false</organismsDiffer>
    <experiments>3</experiments>
</comment>
<comment type="interaction">
    <interactant intactId="EBI-1053164">
        <id>O75190</id>
    </interactant>
    <interactant intactId="EBI-7067260">
        <id>Q8NHS9</id>
        <label>SPATA22</label>
    </interactant>
    <organismsDiffer>false</organismsDiffer>
    <experiments>3</experiments>
</comment>
<comment type="interaction">
    <interactant intactId="EBI-1053164">
        <id>O75190</id>
    </interactant>
    <interactant intactId="EBI-18036029">
        <id>Q3KNS6-3</id>
        <label>ZNF829</label>
    </interactant>
    <organismsDiffer>false</organismsDiffer>
    <experiments>3</experiments>
</comment>
<comment type="interaction">
    <interactant intactId="EBI-1053164">
        <id>O75190</id>
    </interactant>
    <interactant intactId="EBI-12021938">
        <id>Q8NBB4-2</id>
        <label>ZSCAN1</label>
    </interactant>
    <organismsDiffer>false</organismsDiffer>
    <experiments>3</experiments>
</comment>
<comment type="interaction">
    <interactant intactId="EBI-12593112">
        <id>O75190-2</id>
    </interactant>
    <interactant intactId="EBI-11893530">
        <id>Q9NP70</id>
        <label>AMBN</label>
    </interactant>
    <organismsDiffer>false</organismsDiffer>
    <experiments>3</experiments>
</comment>
<comment type="interaction">
    <interactant intactId="EBI-12593112">
        <id>O75190-2</id>
    </interactant>
    <interactant intactId="EBI-25840993">
        <id>Q6ZTN6-2</id>
        <label>ANKRD13D</label>
    </interactant>
    <organismsDiffer>false</organismsDiffer>
    <experiments>3</experiments>
</comment>
<comment type="interaction">
    <interactant intactId="EBI-12593112">
        <id>O75190-2</id>
    </interactant>
    <interactant intactId="EBI-2556852">
        <id>P09525</id>
        <label>ANXA4</label>
    </interactant>
    <organismsDiffer>false</organismsDiffer>
    <experiments>3</experiments>
</comment>
<comment type="interaction">
    <interactant intactId="EBI-12593112">
        <id>O75190-2</id>
    </interactant>
    <interactant intactId="EBI-19124986">
        <id>O94778</id>
        <label>AQP8</label>
    </interactant>
    <organismsDiffer>false</organismsDiffer>
    <experiments>3</experiments>
</comment>
<comment type="interaction">
    <interactant intactId="EBI-12593112">
        <id>O75190-2</id>
    </interactant>
    <interactant intactId="EBI-718459">
        <id>Q9UII2</id>
        <label>ATP5IF1</label>
    </interactant>
    <organismsDiffer>false</organismsDiffer>
    <experiments>3</experiments>
</comment>
<comment type="interaction">
    <interactant intactId="EBI-12593112">
        <id>O75190-2</id>
    </interactant>
    <interactant intactId="EBI-2891281">
        <id>P15313</id>
        <label>ATP6V1B1</label>
    </interactant>
    <organismsDiffer>false</organismsDiffer>
    <experiments>3</experiments>
</comment>
<comment type="interaction">
    <interactant intactId="EBI-12593112">
        <id>O75190-2</id>
    </interactant>
    <interactant intactId="EBI-25834445">
        <id>P54687-4</id>
        <label>BCAT1</label>
    </interactant>
    <organismsDiffer>false</organismsDiffer>
    <experiments>3</experiments>
</comment>
<comment type="interaction">
    <interactant intactId="EBI-12593112">
        <id>O75190-2</id>
    </interactant>
    <interactant intactId="EBI-7936069">
        <id>P06276</id>
        <label>BCHE</label>
    </interactant>
    <organismsDiffer>false</organismsDiffer>
    <experiments>3</experiments>
</comment>
<comment type="interaction">
    <interactant intactId="EBI-12593112">
        <id>O75190-2</id>
    </interactant>
    <interactant intactId="EBI-949378">
        <id>Q14457</id>
        <label>BECN1</label>
    </interactant>
    <organismsDiffer>false</organismsDiffer>
    <experiments>3</experiments>
</comment>
<comment type="interaction">
    <interactant intactId="EBI-12593112">
        <id>O75190-2</id>
    </interactant>
    <interactant intactId="EBI-12108466">
        <id>Q9H0W9-3</id>
        <label>C11orf54</label>
    </interactant>
    <organismsDiffer>false</organismsDiffer>
    <experiments>3</experiments>
</comment>
<comment type="interaction">
    <interactant intactId="EBI-12593112">
        <id>O75190-2</id>
    </interactant>
    <interactant intactId="EBI-12300031">
        <id>Q9NNX6-10</id>
        <label>CD209</label>
    </interactant>
    <organismsDiffer>false</organismsDiffer>
    <experiments>3</experiments>
</comment>
<comment type="interaction">
    <interactant intactId="EBI-12593112">
        <id>O75190-2</id>
    </interactant>
    <interactant intactId="EBI-396137">
        <id>Q9UJX2</id>
        <label>CDC23</label>
    </interactant>
    <organismsDiffer>false</organismsDiffer>
    <experiments>3</experiments>
</comment>
<comment type="interaction">
    <interactant intactId="EBI-12593112">
        <id>O75190-2</id>
    </interactant>
    <interactant intactId="EBI-25836090">
        <id>Q6PJW8-3</id>
        <label>CNST</label>
    </interactant>
    <organismsDiffer>false</organismsDiffer>
    <experiments>3</experiments>
</comment>
<comment type="interaction">
    <interactant intactId="EBI-12593112">
        <id>O75190-2</id>
    </interactant>
    <interactant intactId="EBI-25876196">
        <id>P24310</id>
        <label>COX7A1</label>
    </interactant>
    <organismsDiffer>false</organismsDiffer>
    <experiments>3</experiments>
</comment>
<comment type="interaction">
    <interactant intactId="EBI-12593112">
        <id>O75190-2</id>
    </interactant>
    <interactant intactId="EBI-750444">
        <id>P53672</id>
        <label>CRYBA2</label>
    </interactant>
    <organismsDiffer>false</organismsDiffer>
    <experiments>3</experiments>
</comment>
<comment type="interaction">
    <interactant intactId="EBI-12593112">
        <id>O75190-2</id>
    </interactant>
    <interactant intactId="EBI-954409">
        <id>Q9UBP4</id>
        <label>DKK3</label>
    </interactant>
    <organismsDiffer>false</organismsDiffer>
    <experiments>3</experiments>
</comment>
<comment type="interaction">
    <interactant intactId="EBI-12593112">
        <id>O75190-2</id>
    </interactant>
    <interactant intactId="EBI-12593112">
        <id>O75190-2</id>
        <label>DNAJB6</label>
    </interactant>
    <organismsDiffer>false</organismsDiffer>
    <experiments>2</experiments>
</comment>
<comment type="interaction">
    <interactant intactId="EBI-12593112">
        <id>O75190-2</id>
    </interactant>
    <interactant intactId="EBI-21529239">
        <id>Q86TI2-2</id>
        <label>DPP9</label>
    </interactant>
    <organismsDiffer>false</organismsDiffer>
    <experiments>3</experiments>
</comment>
<comment type="interaction">
    <interactant intactId="EBI-12593112">
        <id>O75190-2</id>
    </interactant>
    <interactant intactId="EBI-372173">
        <id>O77932</id>
        <label>DXO</label>
    </interactant>
    <organismsDiffer>false</organismsDiffer>
    <experiments>3</experiments>
</comment>
<comment type="interaction">
    <interactant intactId="EBI-12593112">
        <id>O75190-2</id>
    </interactant>
    <interactant intactId="EBI-10178160">
        <id>H3BUJ7</id>
        <label>E4F1</label>
    </interactant>
    <organismsDiffer>false</organismsDiffer>
    <experiments>3</experiments>
</comment>
<comment type="interaction">
    <interactant intactId="EBI-12593112">
        <id>O75190-2</id>
    </interactant>
    <interactant intactId="EBI-25905795">
        <id>Q9BQS8-2</id>
        <label>FYCO1</label>
    </interactant>
    <organismsDiffer>false</organismsDiffer>
    <experiments>3</experiments>
</comment>
<comment type="interaction">
    <interactant intactId="EBI-12593112">
        <id>O75190-2</id>
    </interactant>
    <interactant intactId="EBI-2857315">
        <id>Q9BRX5</id>
        <label>GINS3</label>
    </interactant>
    <organismsDiffer>false</organismsDiffer>
    <experiments>3</experiments>
</comment>
<comment type="interaction">
    <interactant intactId="EBI-12593112">
        <id>O75190-2</id>
    </interactant>
    <interactant intactId="EBI-2868501">
        <id>Q6NXT2</id>
        <label>H3-5</label>
    </interactant>
    <organismsDiffer>false</organismsDiffer>
    <experiments>3</experiments>
</comment>
<comment type="interaction">
    <interactant intactId="EBI-12593112">
        <id>O75190-2</id>
    </interactant>
    <interactant intactId="EBI-2514791">
        <id>Q96CS2</id>
        <label>HAUS1</label>
    </interactant>
    <organismsDiffer>false</organismsDiffer>
    <experiments>3</experiments>
</comment>
<comment type="interaction">
    <interactant intactId="EBI-12593112">
        <id>O75190-2</id>
    </interactant>
    <interactant intactId="EBI-395719">
        <id>Q99871</id>
        <label>HAUS7</label>
    </interactant>
    <organismsDiffer>false</organismsDiffer>
    <experiments>3</experiments>
</comment>
<comment type="interaction">
    <interactant intactId="EBI-12593112">
        <id>O75190-2</id>
    </interactant>
    <interactant intactId="EBI-466029">
        <id>P42858</id>
        <label>HTT</label>
    </interactant>
    <organismsDiffer>false</organismsDiffer>
    <experiments>3</experiments>
</comment>
<comment type="interaction">
    <interactant intactId="EBI-12593112">
        <id>O75190-2</id>
    </interactant>
    <interactant intactId="EBI-12823003">
        <id>P80217-2</id>
        <label>IFI35</label>
    </interactant>
    <organismsDiffer>false</organismsDiffer>
    <experiments>3</experiments>
</comment>
<comment type="interaction">
    <interactant intactId="EBI-12593112">
        <id>O75190-2</id>
    </interactant>
    <interactant intactId="EBI-10220600">
        <id>Q8NA54</id>
        <label>IQUB</label>
    </interactant>
    <organismsDiffer>false</organismsDiffer>
    <experiments>3</experiments>
</comment>
<comment type="interaction">
    <interactant intactId="EBI-12593112">
        <id>O75190-2</id>
    </interactant>
    <interactant intactId="EBI-17702098">
        <id>Q8IV33</id>
        <label>KIAA0825</label>
    </interactant>
    <organismsDiffer>false</organismsDiffer>
    <experiments>3</experiments>
</comment>
<comment type="interaction">
    <interactant intactId="EBI-12593112">
        <id>O75190-2</id>
    </interactant>
    <interactant intactId="EBI-1643885">
        <id>Q6P597</id>
        <label>KLC3</label>
    </interactant>
    <organismsDiffer>false</organismsDiffer>
    <experiments>3</experiments>
</comment>
<comment type="interaction">
    <interactant intactId="EBI-12593112">
        <id>O75190-2</id>
    </interactant>
    <interactant intactId="EBI-2696013">
        <id>Q13887</id>
        <label>KLF5</label>
    </interactant>
    <organismsDiffer>false</organismsDiffer>
    <experiments>3</experiments>
</comment>
<comment type="interaction">
    <interactant intactId="EBI-12593112">
        <id>O75190-2</id>
    </interactant>
    <interactant intactId="EBI-8524663">
        <id>Q9UH77</id>
        <label>KLHL3</label>
    </interactant>
    <organismsDiffer>false</organismsDiffer>
    <experiments>3</experiments>
</comment>
<comment type="interaction">
    <interactant intactId="EBI-12593112">
        <id>O75190-2</id>
    </interactant>
    <interactant intactId="EBI-749562">
        <id>Q96JB6</id>
        <label>LOXL4</label>
    </interactant>
    <organismsDiffer>false</organismsDiffer>
    <experiments>3</experiments>
</comment>
<comment type="interaction">
    <interactant intactId="EBI-12593112">
        <id>O75190-2</id>
    </interactant>
    <interactant intactId="EBI-741355">
        <id>Q96LR2</id>
        <label>LURAP1</label>
    </interactant>
    <organismsDiffer>false</organismsDiffer>
    <experiments>3</experiments>
</comment>
<comment type="interaction">
    <interactant intactId="EBI-12593112">
        <id>O75190-2</id>
    </interactant>
    <interactant intactId="EBI-8487781">
        <id>Q8N6F8</id>
        <label>METTL27</label>
    </interactant>
    <organismsDiffer>false</organismsDiffer>
    <experiments>3</experiments>
</comment>
<comment type="interaction">
    <interactant intactId="EBI-12593112">
        <id>O75190-2</id>
    </interactant>
    <interactant intactId="EBI-995714">
        <id>Q9Y605</id>
        <label>MRFAP1</label>
    </interactant>
    <organismsDiffer>false</organismsDiffer>
    <experiments>3</experiments>
</comment>
<comment type="interaction">
    <interactant intactId="EBI-12593112">
        <id>O75190-2</id>
    </interactant>
    <interactant intactId="EBI-10178578">
        <id>I6L9F6</id>
        <label>NEFL</label>
    </interactant>
    <organismsDiffer>false</organismsDiffer>
    <experiments>3</experiments>
</comment>
<comment type="interaction">
    <interactant intactId="EBI-12593112">
        <id>O75190-2</id>
    </interactant>
    <interactant intactId="EBI-1058491">
        <id>Q96FW1</id>
        <label>OTUB1</label>
    </interactant>
    <organismsDiffer>false</organismsDiffer>
    <experiments>3</experiments>
</comment>
<comment type="interaction">
    <interactant intactId="EBI-12593112">
        <id>O75190-2</id>
    </interactant>
    <interactant intactId="EBI-11058011">
        <id>P30154-2</id>
        <label>PPP2R1B</label>
    </interactant>
    <organismsDiffer>false</organismsDiffer>
    <experiments>3</experiments>
</comment>
<comment type="interaction">
    <interactant intactId="EBI-12593112">
        <id>O75190-2</id>
    </interactant>
    <interactant intactId="EBI-11984839">
        <id>Q96QF0-7</id>
        <label>RAB3IP</label>
    </interactant>
    <organismsDiffer>false</organismsDiffer>
    <experiments>3</experiments>
</comment>
<comment type="interaction">
    <interactant intactId="EBI-12593112">
        <id>O75190-2</id>
    </interactant>
    <interactant intactId="EBI-948278">
        <id>Q15293</id>
        <label>RCN1</label>
    </interactant>
    <organismsDiffer>false</organismsDiffer>
    <experiments>3</experiments>
</comment>
<comment type="interaction">
    <interactant intactId="EBI-12593112">
        <id>O75190-2</id>
    </interactant>
    <interactant intactId="EBI-745810">
        <id>Q96EN9</id>
        <label>REX1BD</label>
    </interactant>
    <organismsDiffer>false</organismsDiffer>
    <experiments>3</experiments>
</comment>
<comment type="interaction">
    <interactant intactId="EBI-12593112">
        <id>O75190-2</id>
    </interactant>
    <interactant intactId="EBI-25837959">
        <id>Q9BY12-3</id>
        <label>SCAPER</label>
    </interactant>
    <organismsDiffer>false</organismsDiffer>
    <experiments>3</experiments>
</comment>
<comment type="interaction">
    <interactant intactId="EBI-12593112">
        <id>O75190-2</id>
    </interactant>
    <interactant intactId="EBI-747719">
        <id>Q96H20</id>
        <label>SNF8</label>
    </interactant>
    <organismsDiffer>false</organismsDiffer>
    <experiments>3</experiments>
</comment>
<comment type="interaction">
    <interactant intactId="EBI-12593112">
        <id>O75190-2</id>
    </interactant>
    <interactant intactId="EBI-10696971">
        <id>Q7Z6I5</id>
        <label>SPATA12</label>
    </interactant>
    <organismsDiffer>false</organismsDiffer>
    <experiments>3</experiments>
</comment>
<comment type="interaction">
    <interactant intactId="EBI-12593112">
        <id>O75190-2</id>
    </interactant>
    <interactant intactId="EBI-18616594">
        <id>Q8IXS7</id>
        <label>SRGAP3</label>
    </interactant>
    <organismsDiffer>false</organismsDiffer>
    <experiments>3</experiments>
</comment>
<comment type="interaction">
    <interactant intactId="EBI-12593112">
        <id>O75190-2</id>
    </interactant>
    <interactant intactId="EBI-714135">
        <id>O75558</id>
        <label>STX11</label>
    </interactant>
    <organismsDiffer>false</organismsDiffer>
    <experiments>3</experiments>
</comment>
<comment type="interaction">
    <interactant intactId="EBI-12593112">
        <id>O75190-2</id>
    </interactant>
    <interactant intactId="EBI-954089">
        <id>O15273</id>
        <label>TCAP</label>
    </interactant>
    <organismsDiffer>false</organismsDiffer>
    <experiments>3</experiments>
</comment>
<comment type="interaction">
    <interactant intactId="EBI-12593112">
        <id>O75190-2</id>
    </interactant>
    <interactant intactId="EBI-17438286">
        <id>Q8WTV1</id>
        <label>THAP3</label>
    </interactant>
    <organismsDiffer>false</organismsDiffer>
    <experiments>3</experiments>
</comment>
<comment type="interaction">
    <interactant intactId="EBI-12593112">
        <id>O75190-2</id>
    </interactant>
    <interactant intactId="EBI-396540">
        <id>Q12888</id>
        <label>TP53BP1</label>
    </interactant>
    <organismsDiffer>false</organismsDiffer>
    <experiments>3</experiments>
</comment>
<comment type="interaction">
    <interactant intactId="EBI-12593112">
        <id>O75190-2</id>
    </interactant>
    <interactant intactId="EBI-21353855">
        <id>Q99598</id>
        <label>TSNAX</label>
    </interactant>
    <organismsDiffer>false</organismsDiffer>
    <experiments>3</experiments>
</comment>
<comment type="interaction">
    <interactant intactId="EBI-12593112">
        <id>O75190-2</id>
    </interactant>
    <interactant intactId="EBI-2555404">
        <id>Q6PID6</id>
        <label>TTC33</label>
    </interactant>
    <organismsDiffer>false</organismsDiffer>
    <experiments>3</experiments>
</comment>
<comment type="interaction">
    <interactant intactId="EBI-12593112">
        <id>O75190-2</id>
    </interactant>
    <interactant intactId="EBI-373380">
        <id>Q9H270</id>
        <label>VPS11</label>
    </interactant>
    <organismsDiffer>false</organismsDiffer>
    <experiments>3</experiments>
</comment>
<comment type="interaction">
    <interactant intactId="EBI-12593112">
        <id>O75190-2</id>
    </interactant>
    <interactant intactId="EBI-7705033">
        <id>Q9BRX9</id>
        <label>WDR83</label>
    </interactant>
    <organismsDiffer>false</organismsDiffer>
    <experiments>3</experiments>
</comment>
<comment type="subcellular location">
    <subcellularLocation>
        <location evidence="5">Cytoplasm</location>
        <location evidence="5">Perinuclear region</location>
    </subcellularLocation>
    <subcellularLocation>
        <location evidence="5">Nucleus</location>
    </subcellularLocation>
    <subcellularLocation>
        <location evidence="9">Cytoplasm</location>
        <location evidence="9">Myofibril</location>
        <location evidence="9">Sarcomere</location>
        <location evidence="9">Z line</location>
    </subcellularLocation>
</comment>
<comment type="alternative products">
    <event type="alternative splicing"/>
    <isoform>
        <id>O75190-1</id>
        <name>A</name>
        <sequence type="displayed"/>
    </isoform>
    <isoform>
        <id>O75190-2</id>
        <name>B</name>
        <sequence type="described" ref="VSP_001289 VSP_001290"/>
    </isoform>
    <isoform>
        <id>O75190-3</id>
        <name>C</name>
        <name>a</name>
        <sequence type="described" ref="VSP_026180"/>
    </isoform>
    <isoform>
        <id>O75190-4</id>
        <name>D</name>
        <sequence type="described" ref="VSP_053894"/>
    </isoform>
</comment>
<comment type="tissue specificity">
    <text evidence="4 6 9 11">Widely expressed. Highest levels in testis and brain, and lower levels in heart, spleen, intestine, ovary, placenta, lung, kidney, pancreas, thymus, prostate, skeletal muscle, liver and leukocytes. In testis, expressed in germ cells in the earlier stages of differentiation pathway as well as in spermatids. In brain, expressed at a higher level in hippocampus and thalamus and a lower level in amygdala, substantia nigra, corpus callosum and caudate nucleus.</text>
</comment>
<comment type="domain">
    <molecule>Isoform B</molecule>
    <text evidence="9">The antiaggregation activity of isoform B resides in the serine-rich region and the C-terminus.</text>
</comment>
<comment type="disease" evidence="8 9">
    <disease id="DI-03434">
        <name>Muscular dystrophy, limb-girdle, autosomal dominant 1</name>
        <acronym>LGMDD1</acronym>
        <description>An autosomal dominant myopathy characterized by adult onset of proximal muscle weakness, beginning in the hip girdle region and later progressing to the shoulder girdle region.</description>
        <dbReference type="MIM" id="603511"/>
    </disease>
    <text evidence="9">The disease is caused by variants affecting the gene represented in this entry. There is evidence that LGMDD1 is caused by dysfunction of isoform B (PubMed:22366786).</text>
</comment>
<comment type="sequence caution" evidence="24">
    <conflict type="frameshift">
        <sequence resource="EMBL-CDS" id="AAD16010"/>
    </conflict>
</comment>
<comment type="sequence caution" evidence="24">
    <conflict type="erroneous initiation">
        <sequence resource="EMBL-CDS" id="BAD93096"/>
    </conflict>
</comment>
<dbReference type="EMBL" id="AF080569">
    <property type="protein sequence ID" value="AAD16010.1"/>
    <property type="status" value="ALT_FRAME"/>
    <property type="molecule type" value="mRNA"/>
</dbReference>
<dbReference type="EMBL" id="AB015798">
    <property type="protein sequence ID" value="BAA88769.1"/>
    <property type="molecule type" value="mRNA"/>
</dbReference>
<dbReference type="EMBL" id="AB015799">
    <property type="protein sequence ID" value="BAA88770.1"/>
    <property type="molecule type" value="mRNA"/>
</dbReference>
<dbReference type="EMBL" id="AF060703">
    <property type="protein sequence ID" value="AAF21257.1"/>
    <property type="molecule type" value="mRNA"/>
</dbReference>
<dbReference type="EMBL" id="AB014888">
    <property type="protein sequence ID" value="BAA32209.1"/>
    <property type="molecule type" value="mRNA"/>
</dbReference>
<dbReference type="EMBL" id="AF075601">
    <property type="protein sequence ID" value="AAD43194.1"/>
    <property type="molecule type" value="mRNA"/>
</dbReference>
<dbReference type="EMBL" id="CR533498">
    <property type="protein sequence ID" value="CAG38529.1"/>
    <property type="molecule type" value="mRNA"/>
</dbReference>
<dbReference type="EMBL" id="AB209859">
    <property type="protein sequence ID" value="BAD93096.1"/>
    <property type="status" value="ALT_INIT"/>
    <property type="molecule type" value="mRNA"/>
</dbReference>
<dbReference type="EMBL" id="AK223601">
    <property type="protein sequence ID" value="BAD97321.1"/>
    <property type="molecule type" value="mRNA"/>
</dbReference>
<dbReference type="EMBL" id="AK291953">
    <property type="protein sequence ID" value="BAF84642.1"/>
    <property type="molecule type" value="mRNA"/>
</dbReference>
<dbReference type="EMBL" id="AK293025">
    <property type="protein sequence ID" value="BAF85714.1"/>
    <property type="molecule type" value="mRNA"/>
</dbReference>
<dbReference type="EMBL" id="AK297796">
    <property type="protein sequence ID" value="BAG60135.1"/>
    <property type="molecule type" value="mRNA"/>
</dbReference>
<dbReference type="EMBL" id="AL136707">
    <property type="protein sequence ID" value="CAB66642.1"/>
    <property type="molecule type" value="mRNA"/>
</dbReference>
<dbReference type="EMBL" id="AC006372">
    <property type="status" value="NOT_ANNOTATED_CDS"/>
    <property type="molecule type" value="Genomic_DNA"/>
</dbReference>
<dbReference type="EMBL" id="AC079306">
    <property type="protein sequence ID" value="AAS07392.1"/>
    <property type="molecule type" value="Genomic_DNA"/>
</dbReference>
<dbReference type="EMBL" id="AC079306">
    <property type="protein sequence ID" value="AAS07393.1"/>
    <property type="molecule type" value="Genomic_DNA"/>
</dbReference>
<dbReference type="EMBL" id="CH236954">
    <property type="protein sequence ID" value="EAL23923.1"/>
    <property type="molecule type" value="Genomic_DNA"/>
</dbReference>
<dbReference type="EMBL" id="CH236954">
    <property type="protein sequence ID" value="EAL23924.1"/>
    <property type="molecule type" value="Genomic_DNA"/>
</dbReference>
<dbReference type="EMBL" id="CH471149">
    <property type="protein sequence ID" value="EAX04570.1"/>
    <property type="molecule type" value="Genomic_DNA"/>
</dbReference>
<dbReference type="EMBL" id="BC000177">
    <property type="protein sequence ID" value="AAH00177.1"/>
    <property type="molecule type" value="mRNA"/>
</dbReference>
<dbReference type="EMBL" id="BC002446">
    <property type="protein sequence ID" value="AAH02446.1"/>
    <property type="molecule type" value="mRNA"/>
</dbReference>
<dbReference type="CCDS" id="CCDS47755.1">
    <molecule id="O75190-2"/>
</dbReference>
<dbReference type="CCDS" id="CCDS5946.1">
    <molecule id="O75190-1"/>
</dbReference>
<dbReference type="RefSeq" id="NP_005485.1">
    <molecule id="O75190-2"/>
    <property type="nucleotide sequence ID" value="NM_005494.3"/>
</dbReference>
<dbReference type="RefSeq" id="NP_490647.1">
    <molecule id="O75190-1"/>
    <property type="nucleotide sequence ID" value="NM_058246.4"/>
</dbReference>
<dbReference type="RefSeq" id="XP_047275652.1">
    <molecule id="O75190-1"/>
    <property type="nucleotide sequence ID" value="XM_047419696.1"/>
</dbReference>
<dbReference type="RefSeq" id="XP_047275653.1">
    <molecule id="O75190-1"/>
    <property type="nucleotide sequence ID" value="XM_047419697.1"/>
</dbReference>
<dbReference type="RefSeq" id="XP_047275654.1">
    <molecule id="O75190-1"/>
    <property type="nucleotide sequence ID" value="XM_047419698.1"/>
</dbReference>
<dbReference type="RefSeq" id="XP_054212947.1">
    <molecule id="O75190-1"/>
    <property type="nucleotide sequence ID" value="XM_054356972.1"/>
</dbReference>
<dbReference type="RefSeq" id="XP_054212948.1">
    <molecule id="O75190-1"/>
    <property type="nucleotide sequence ID" value="XM_054356973.1"/>
</dbReference>
<dbReference type="RefSeq" id="XP_054212949.1">
    <molecule id="O75190-1"/>
    <property type="nucleotide sequence ID" value="XM_054356974.1"/>
</dbReference>
<dbReference type="PDB" id="6U3R">
    <property type="method" value="NMR"/>
    <property type="chains" value="A=1-127, A=184-231"/>
</dbReference>
<dbReference type="PDB" id="6U3S">
    <property type="method" value="NMR"/>
    <property type="chains" value="A=1-127, A=184-231"/>
</dbReference>
<dbReference type="PDB" id="7JSQ">
    <property type="method" value="NMR"/>
    <property type="chains" value="A=185-231"/>
</dbReference>
<dbReference type="PDB" id="7QBY">
    <property type="method" value="NMR"/>
    <property type="chains" value="A=185-231"/>
</dbReference>
<dbReference type="PDBsum" id="6U3R"/>
<dbReference type="PDBsum" id="6U3S"/>
<dbReference type="PDBsum" id="7JSQ"/>
<dbReference type="PDBsum" id="7QBY"/>
<dbReference type="SMR" id="O75190"/>
<dbReference type="BioGRID" id="115360">
    <property type="interactions" value="406"/>
</dbReference>
<dbReference type="FunCoup" id="O75190">
    <property type="interactions" value="3115"/>
</dbReference>
<dbReference type="IntAct" id="O75190">
    <property type="interactions" value="312"/>
</dbReference>
<dbReference type="MINT" id="O75190"/>
<dbReference type="STRING" id="9606.ENSP00000262177"/>
<dbReference type="ChEMBL" id="CHEMBL4295674"/>
<dbReference type="iPTMnet" id="O75190"/>
<dbReference type="PhosphoSitePlus" id="O75190"/>
<dbReference type="SwissPalm" id="O75190"/>
<dbReference type="BioMuta" id="DNAJB6"/>
<dbReference type="jPOST" id="O75190"/>
<dbReference type="MassIVE" id="O75190"/>
<dbReference type="PaxDb" id="9606-ENSP00000262177"/>
<dbReference type="PeptideAtlas" id="O75190"/>
<dbReference type="ProteomicsDB" id="4676"/>
<dbReference type="ProteomicsDB" id="49860">
    <molecule id="O75190-1"/>
</dbReference>
<dbReference type="ProteomicsDB" id="49861">
    <molecule id="O75190-2"/>
</dbReference>
<dbReference type="ProteomicsDB" id="49862">
    <molecule id="O75190-3"/>
</dbReference>
<dbReference type="Pumba" id="O75190"/>
<dbReference type="TopDownProteomics" id="O75190-1">
    <molecule id="O75190-1"/>
</dbReference>
<dbReference type="Antibodypedia" id="3316">
    <property type="antibodies" value="330 antibodies from 31 providers"/>
</dbReference>
<dbReference type="DNASU" id="10049"/>
<dbReference type="Ensembl" id="ENST00000262177.9">
    <molecule id="O75190-1"/>
    <property type="protein sequence ID" value="ENSP00000262177.4"/>
    <property type="gene ID" value="ENSG00000105993.15"/>
</dbReference>
<dbReference type="Ensembl" id="ENST00000429029.6">
    <molecule id="O75190-2"/>
    <property type="protein sequence ID" value="ENSP00000397556.2"/>
    <property type="gene ID" value="ENSG00000105993.15"/>
</dbReference>
<dbReference type="GeneID" id="10049"/>
<dbReference type="KEGG" id="hsa:10049"/>
<dbReference type="MANE-Select" id="ENST00000262177.9">
    <property type="protein sequence ID" value="ENSP00000262177.4"/>
    <property type="RefSeq nucleotide sequence ID" value="NM_058246.4"/>
    <property type="RefSeq protein sequence ID" value="NP_490647.1"/>
</dbReference>
<dbReference type="UCSC" id="uc003wnj.4">
    <molecule id="O75190-1"/>
    <property type="organism name" value="human"/>
</dbReference>
<dbReference type="AGR" id="HGNC:14888"/>
<dbReference type="CTD" id="10049"/>
<dbReference type="DisGeNET" id="10049"/>
<dbReference type="GeneCards" id="DNAJB6"/>
<dbReference type="HGNC" id="HGNC:14888">
    <property type="gene designation" value="DNAJB6"/>
</dbReference>
<dbReference type="HPA" id="ENSG00000105993">
    <property type="expression patterns" value="Low tissue specificity"/>
</dbReference>
<dbReference type="MalaCards" id="DNAJB6"/>
<dbReference type="MIM" id="603511">
    <property type="type" value="phenotype"/>
</dbReference>
<dbReference type="MIM" id="611332">
    <property type="type" value="gene"/>
</dbReference>
<dbReference type="neXtProt" id="NX_O75190"/>
<dbReference type="OpenTargets" id="ENSG00000105993"/>
<dbReference type="Orphanet" id="34516">
    <property type="disease" value="DNAJB6-related limb-girdle muscular dystrophy D1"/>
</dbReference>
<dbReference type="PharmGKB" id="PA27418"/>
<dbReference type="VEuPathDB" id="HostDB:ENSG00000105993"/>
<dbReference type="eggNOG" id="KOG0714">
    <property type="taxonomic scope" value="Eukaryota"/>
</dbReference>
<dbReference type="GeneTree" id="ENSGT00940000154205"/>
<dbReference type="InParanoid" id="O75190"/>
<dbReference type="OMA" id="APRHFPW"/>
<dbReference type="OrthoDB" id="9539442at2759"/>
<dbReference type="PAN-GO" id="O75190">
    <property type="GO annotations" value="6 GO annotations based on evolutionary models"/>
</dbReference>
<dbReference type="PhylomeDB" id="O75190"/>
<dbReference type="TreeFam" id="TF105142"/>
<dbReference type="PathwayCommons" id="O75190"/>
<dbReference type="Reactome" id="R-HSA-3371453">
    <property type="pathway name" value="Regulation of HSF1-mediated heat shock response"/>
</dbReference>
<dbReference type="SignaLink" id="O75190"/>
<dbReference type="BioGRID-ORCS" id="10049">
    <property type="hits" value="198 hits in 1168 CRISPR screens"/>
</dbReference>
<dbReference type="CD-CODE" id="D02F3EC8">
    <property type="entry name" value="Peri-nucleolar condensate"/>
</dbReference>
<dbReference type="CD-CODE" id="FB4E32DD">
    <property type="entry name" value="Presynaptic clusters and postsynaptic densities"/>
</dbReference>
<dbReference type="ChiTaRS" id="DNAJB6">
    <property type="organism name" value="human"/>
</dbReference>
<dbReference type="GeneWiki" id="DNAJB6"/>
<dbReference type="GenomeRNAi" id="10049"/>
<dbReference type="Pharos" id="O75190">
    <property type="development level" value="Tbio"/>
</dbReference>
<dbReference type="PRO" id="PR:O75190"/>
<dbReference type="Proteomes" id="UP000005640">
    <property type="component" value="Chromosome 7"/>
</dbReference>
<dbReference type="RNAct" id="O75190">
    <property type="molecule type" value="protein"/>
</dbReference>
<dbReference type="Bgee" id="ENSG00000105993">
    <property type="expression patterns" value="Expressed in cortical plate and 188 other cell types or tissues"/>
</dbReference>
<dbReference type="ExpressionAtlas" id="O75190">
    <property type="expression patterns" value="baseline and differential"/>
</dbReference>
<dbReference type="GO" id="GO:0005737">
    <property type="term" value="C:cytoplasm"/>
    <property type="evidence" value="ECO:0000318"/>
    <property type="project" value="GO_Central"/>
</dbReference>
<dbReference type="GO" id="GO:0005829">
    <property type="term" value="C:cytosol"/>
    <property type="evidence" value="ECO:0000314"/>
    <property type="project" value="HPA"/>
</dbReference>
<dbReference type="GO" id="GO:0016020">
    <property type="term" value="C:membrane"/>
    <property type="evidence" value="ECO:0007005"/>
    <property type="project" value="UniProtKB"/>
</dbReference>
<dbReference type="GO" id="GO:0005654">
    <property type="term" value="C:nucleoplasm"/>
    <property type="evidence" value="ECO:0000314"/>
    <property type="project" value="HPA"/>
</dbReference>
<dbReference type="GO" id="GO:0005634">
    <property type="term" value="C:nucleus"/>
    <property type="evidence" value="ECO:0000314"/>
    <property type="project" value="UniProtKB"/>
</dbReference>
<dbReference type="GO" id="GO:0048471">
    <property type="term" value="C:perinuclear region of cytoplasm"/>
    <property type="evidence" value="ECO:0000314"/>
    <property type="project" value="UniProtKB"/>
</dbReference>
<dbReference type="GO" id="GO:0030018">
    <property type="term" value="C:Z disc"/>
    <property type="evidence" value="ECO:0000314"/>
    <property type="project" value="UniProtKB"/>
</dbReference>
<dbReference type="GO" id="GO:0001671">
    <property type="term" value="F:ATPase activator activity"/>
    <property type="evidence" value="ECO:0000314"/>
    <property type="project" value="UniProtKB"/>
</dbReference>
<dbReference type="GO" id="GO:0003677">
    <property type="term" value="F:DNA binding"/>
    <property type="evidence" value="ECO:0007669"/>
    <property type="project" value="Ensembl"/>
</dbReference>
<dbReference type="GO" id="GO:0031072">
    <property type="term" value="F:heat shock protein binding"/>
    <property type="evidence" value="ECO:0000314"/>
    <property type="project" value="UniProtKB"/>
</dbReference>
<dbReference type="GO" id="GO:0030544">
    <property type="term" value="F:Hsp70 protein binding"/>
    <property type="evidence" value="ECO:0007669"/>
    <property type="project" value="InterPro"/>
</dbReference>
<dbReference type="GO" id="GO:0042802">
    <property type="term" value="F:identical protein binding"/>
    <property type="evidence" value="ECO:0000353"/>
    <property type="project" value="IntAct"/>
</dbReference>
<dbReference type="GO" id="GO:0044183">
    <property type="term" value="F:protein folding chaperone"/>
    <property type="evidence" value="ECO:0000318"/>
    <property type="project" value="GO_Central"/>
</dbReference>
<dbReference type="GO" id="GO:0051087">
    <property type="term" value="F:protein-folding chaperone binding"/>
    <property type="evidence" value="ECO:0000314"/>
    <property type="project" value="UniProtKB"/>
</dbReference>
<dbReference type="GO" id="GO:0051082">
    <property type="term" value="F:unfolded protein binding"/>
    <property type="evidence" value="ECO:0000314"/>
    <property type="project" value="UniProtKB"/>
</dbReference>
<dbReference type="GO" id="GO:0030036">
    <property type="term" value="P:actin cytoskeleton organization"/>
    <property type="evidence" value="ECO:0007669"/>
    <property type="project" value="Ensembl"/>
</dbReference>
<dbReference type="GO" id="GO:0061077">
    <property type="term" value="P:chaperone-mediated protein folding"/>
    <property type="evidence" value="ECO:0000318"/>
    <property type="project" value="GO_Central"/>
</dbReference>
<dbReference type="GO" id="GO:0060710">
    <property type="term" value="P:chorio-allantoic fusion"/>
    <property type="evidence" value="ECO:0007669"/>
    <property type="project" value="Ensembl"/>
</dbReference>
<dbReference type="GO" id="GO:0060717">
    <property type="term" value="P:chorion development"/>
    <property type="evidence" value="ECO:0007669"/>
    <property type="project" value="Ensembl"/>
</dbReference>
<dbReference type="GO" id="GO:0030198">
    <property type="term" value="P:extracellular matrix organization"/>
    <property type="evidence" value="ECO:0007669"/>
    <property type="project" value="Ensembl"/>
</dbReference>
<dbReference type="GO" id="GO:0045109">
    <property type="term" value="P:intermediate filament organization"/>
    <property type="evidence" value="ECO:0000314"/>
    <property type="project" value="UniProtKB"/>
</dbReference>
<dbReference type="GO" id="GO:0045892">
    <property type="term" value="P:negative regulation of DNA-templated transcription"/>
    <property type="evidence" value="ECO:0007669"/>
    <property type="project" value="Ensembl"/>
</dbReference>
<dbReference type="GO" id="GO:0090084">
    <property type="term" value="P:negative regulation of inclusion body assembly"/>
    <property type="evidence" value="ECO:0000314"/>
    <property type="project" value="UniProtKB"/>
</dbReference>
<dbReference type="GO" id="GO:0050877">
    <property type="term" value="P:nervous system process"/>
    <property type="evidence" value="ECO:0000314"/>
    <property type="project" value="UniProtKB"/>
</dbReference>
<dbReference type="GO" id="GO:0006457">
    <property type="term" value="P:protein folding"/>
    <property type="evidence" value="ECO:0000314"/>
    <property type="project" value="UniProtKB"/>
</dbReference>
<dbReference type="GO" id="GO:0034504">
    <property type="term" value="P:protein localization to nucleus"/>
    <property type="evidence" value="ECO:0007669"/>
    <property type="project" value="Ensembl"/>
</dbReference>
<dbReference type="GO" id="GO:1900034">
    <property type="term" value="P:regulation of cellular response to heat"/>
    <property type="evidence" value="ECO:0000304"/>
    <property type="project" value="Reactome"/>
</dbReference>
<dbReference type="GO" id="GO:0032880">
    <property type="term" value="P:regulation of protein localization"/>
    <property type="evidence" value="ECO:0000315"/>
    <property type="project" value="ParkinsonsUK-UCL"/>
</dbReference>
<dbReference type="GO" id="GO:0060715">
    <property type="term" value="P:syncytiotrophoblast cell differentiation involved in labyrinthine layer development"/>
    <property type="evidence" value="ECO:0007669"/>
    <property type="project" value="Ensembl"/>
</dbReference>
<dbReference type="CDD" id="cd06257">
    <property type="entry name" value="DnaJ"/>
    <property type="match status" value="1"/>
</dbReference>
<dbReference type="FunFam" id="1.10.287.110:FF:000022">
    <property type="entry name" value="DnaJ homolog subfamily B member 6"/>
    <property type="match status" value="1"/>
</dbReference>
<dbReference type="Gene3D" id="1.10.287.110">
    <property type="entry name" value="DnaJ domain"/>
    <property type="match status" value="1"/>
</dbReference>
<dbReference type="InterPro" id="IPR001623">
    <property type="entry name" value="DnaJ_domain"/>
</dbReference>
<dbReference type="InterPro" id="IPR018253">
    <property type="entry name" value="DnaJ_domain_CS"/>
</dbReference>
<dbReference type="InterPro" id="IPR043183">
    <property type="entry name" value="DNJB2/6-like"/>
</dbReference>
<dbReference type="InterPro" id="IPR036869">
    <property type="entry name" value="J_dom_sf"/>
</dbReference>
<dbReference type="PANTHER" id="PTHR45168">
    <property type="entry name" value="DNAJ HOMOLOG SUBFAMILY B MEMBER 2"/>
    <property type="match status" value="1"/>
</dbReference>
<dbReference type="PANTHER" id="PTHR45168:SF4">
    <property type="entry name" value="SIMILAR TO DNAJ HOMOLOG SUBFAMILY B MEMBER 6 (HEAT SHOCK PROTEIN J2) (HSJ-2) (MRJ) (MDJ4)"/>
    <property type="match status" value="1"/>
</dbReference>
<dbReference type="Pfam" id="PF00226">
    <property type="entry name" value="DnaJ"/>
    <property type="match status" value="1"/>
</dbReference>
<dbReference type="PRINTS" id="PR00625">
    <property type="entry name" value="JDOMAIN"/>
</dbReference>
<dbReference type="SMART" id="SM00271">
    <property type="entry name" value="DnaJ"/>
    <property type="match status" value="1"/>
</dbReference>
<dbReference type="SUPFAM" id="SSF46565">
    <property type="entry name" value="Chaperone J-domain"/>
    <property type="match status" value="1"/>
</dbReference>
<dbReference type="PROSITE" id="PS00636">
    <property type="entry name" value="DNAJ_1"/>
    <property type="match status" value="1"/>
</dbReference>
<dbReference type="PROSITE" id="PS50076">
    <property type="entry name" value="DNAJ_2"/>
    <property type="match status" value="1"/>
</dbReference>